<evidence type="ECO:0000255" key="1">
    <source>
        <dbReference type="HAMAP-Rule" id="MF_00551"/>
    </source>
</evidence>
<feature type="chain" id="PRO_0000164466" description="Uridine kinase">
    <location>
        <begin position="1"/>
        <end position="222"/>
    </location>
</feature>
<feature type="binding site" evidence="1">
    <location>
        <begin position="13"/>
        <end position="20"/>
    </location>
    <ligand>
        <name>ATP</name>
        <dbReference type="ChEBI" id="CHEBI:30616"/>
    </ligand>
</feature>
<protein>
    <recommendedName>
        <fullName evidence="1">Uridine kinase</fullName>
        <ecNumber evidence="1">2.7.1.48</ecNumber>
    </recommendedName>
    <alternativeName>
        <fullName evidence="1">Cytidine monophosphokinase</fullName>
    </alternativeName>
    <alternativeName>
        <fullName evidence="1">Uridine monophosphokinase</fullName>
    </alternativeName>
</protein>
<proteinExistence type="inferred from homology"/>
<keyword id="KW-0067">ATP-binding</keyword>
<keyword id="KW-0963">Cytoplasm</keyword>
<keyword id="KW-0418">Kinase</keyword>
<keyword id="KW-0547">Nucleotide-binding</keyword>
<keyword id="KW-0808">Transferase</keyword>
<sequence length="222" mass="25758">MLMMLMMIIGITGGSGAGKTTLTQNIKEIFGEDVSVICQDNYYKDRSHYTPEERANLIWDHPDAFDNDLLISDIKRLKNNEIVQAPVFDFVLGNRSKTEIETIYPSKVILVEGILVFENQELRDLMDIRIFVDTDADERILRRMVRDVQEQGDSVDCIMSRYLSMVKPMHEKFIEPTRKYADIIVHGNYRQNVVTNILSQKIKNHLENALESDETYYMVNSK</sequence>
<dbReference type="EC" id="2.7.1.48" evidence="1"/>
<dbReference type="EMBL" id="AE001363">
    <property type="protein sequence ID" value="AAD18874.1"/>
    <property type="molecule type" value="Genomic_DNA"/>
</dbReference>
<dbReference type="EMBL" id="AE002161">
    <property type="protein sequence ID" value="AAF37907.1"/>
    <property type="molecule type" value="Genomic_DNA"/>
</dbReference>
<dbReference type="EMBL" id="BA000008">
    <property type="protein sequence ID" value="BAA98942.1"/>
    <property type="molecule type" value="Genomic_DNA"/>
</dbReference>
<dbReference type="EMBL" id="AE009440">
    <property type="protein sequence ID" value="AAP98692.1"/>
    <property type="molecule type" value="Genomic_DNA"/>
</dbReference>
<dbReference type="PIR" id="D86582">
    <property type="entry name" value="D86582"/>
</dbReference>
<dbReference type="PIR" id="E72041">
    <property type="entry name" value="E72041"/>
</dbReference>
<dbReference type="RefSeq" id="NP_224931.1">
    <property type="nucleotide sequence ID" value="NC_000922.1"/>
</dbReference>
<dbReference type="RefSeq" id="WP_010883373.1">
    <property type="nucleotide sequence ID" value="NZ_LN847257.1"/>
</dbReference>
<dbReference type="SMR" id="Q9Z7H0"/>
<dbReference type="STRING" id="406984.CPK_ORF00141"/>
<dbReference type="GeneID" id="45050790"/>
<dbReference type="KEGG" id="cpa:CP_0011"/>
<dbReference type="KEGG" id="cpj:CPj0735"/>
<dbReference type="KEGG" id="cpn:CPn_0735"/>
<dbReference type="KEGG" id="cpt:CpB0763"/>
<dbReference type="PATRIC" id="fig|115713.3.peg.811"/>
<dbReference type="eggNOG" id="COG0572">
    <property type="taxonomic scope" value="Bacteria"/>
</dbReference>
<dbReference type="HOGENOM" id="CLU_021278_1_2_0"/>
<dbReference type="OrthoDB" id="9777642at2"/>
<dbReference type="UniPathway" id="UPA00574">
    <property type="reaction ID" value="UER00637"/>
</dbReference>
<dbReference type="UniPathway" id="UPA00579">
    <property type="reaction ID" value="UER00640"/>
</dbReference>
<dbReference type="Proteomes" id="UP000000583">
    <property type="component" value="Chromosome"/>
</dbReference>
<dbReference type="Proteomes" id="UP000000801">
    <property type="component" value="Chromosome"/>
</dbReference>
<dbReference type="GO" id="GO:0005737">
    <property type="term" value="C:cytoplasm"/>
    <property type="evidence" value="ECO:0007669"/>
    <property type="project" value="UniProtKB-SubCell"/>
</dbReference>
<dbReference type="GO" id="GO:0005524">
    <property type="term" value="F:ATP binding"/>
    <property type="evidence" value="ECO:0007669"/>
    <property type="project" value="UniProtKB-UniRule"/>
</dbReference>
<dbReference type="GO" id="GO:0043771">
    <property type="term" value="F:cytidine kinase activity"/>
    <property type="evidence" value="ECO:0007669"/>
    <property type="project" value="RHEA"/>
</dbReference>
<dbReference type="GO" id="GO:0004849">
    <property type="term" value="F:uridine kinase activity"/>
    <property type="evidence" value="ECO:0007669"/>
    <property type="project" value="UniProtKB-UniRule"/>
</dbReference>
<dbReference type="GO" id="GO:0044211">
    <property type="term" value="P:CTP salvage"/>
    <property type="evidence" value="ECO:0007669"/>
    <property type="project" value="UniProtKB-UniRule"/>
</dbReference>
<dbReference type="GO" id="GO:0044206">
    <property type="term" value="P:UMP salvage"/>
    <property type="evidence" value="ECO:0007669"/>
    <property type="project" value="UniProtKB-UniRule"/>
</dbReference>
<dbReference type="CDD" id="cd02023">
    <property type="entry name" value="UMPK"/>
    <property type="match status" value="1"/>
</dbReference>
<dbReference type="Gene3D" id="3.40.50.300">
    <property type="entry name" value="P-loop containing nucleotide triphosphate hydrolases"/>
    <property type="match status" value="1"/>
</dbReference>
<dbReference type="HAMAP" id="MF_00551">
    <property type="entry name" value="Uridine_kinase"/>
    <property type="match status" value="1"/>
</dbReference>
<dbReference type="InterPro" id="IPR027417">
    <property type="entry name" value="P-loop_NTPase"/>
</dbReference>
<dbReference type="InterPro" id="IPR006083">
    <property type="entry name" value="PRK/URK"/>
</dbReference>
<dbReference type="InterPro" id="IPR026008">
    <property type="entry name" value="Uridine_kinase"/>
</dbReference>
<dbReference type="InterPro" id="IPR000764">
    <property type="entry name" value="Uridine_kinase-like"/>
</dbReference>
<dbReference type="NCBIfam" id="NF004018">
    <property type="entry name" value="PRK05480.1"/>
    <property type="match status" value="1"/>
</dbReference>
<dbReference type="NCBIfam" id="TIGR00235">
    <property type="entry name" value="udk"/>
    <property type="match status" value="1"/>
</dbReference>
<dbReference type="PANTHER" id="PTHR10285">
    <property type="entry name" value="URIDINE KINASE"/>
    <property type="match status" value="1"/>
</dbReference>
<dbReference type="Pfam" id="PF00485">
    <property type="entry name" value="PRK"/>
    <property type="match status" value="1"/>
</dbReference>
<dbReference type="PRINTS" id="PR00988">
    <property type="entry name" value="URIDINKINASE"/>
</dbReference>
<dbReference type="SUPFAM" id="SSF52540">
    <property type="entry name" value="P-loop containing nucleoside triphosphate hydrolases"/>
    <property type="match status" value="1"/>
</dbReference>
<organism>
    <name type="scientific">Chlamydia pneumoniae</name>
    <name type="common">Chlamydophila pneumoniae</name>
    <dbReference type="NCBI Taxonomy" id="83558"/>
    <lineage>
        <taxon>Bacteria</taxon>
        <taxon>Pseudomonadati</taxon>
        <taxon>Chlamydiota</taxon>
        <taxon>Chlamydiia</taxon>
        <taxon>Chlamydiales</taxon>
        <taxon>Chlamydiaceae</taxon>
        <taxon>Chlamydia/Chlamydophila group</taxon>
        <taxon>Chlamydia</taxon>
    </lineage>
</organism>
<gene>
    <name evidence="1" type="primary">udk</name>
    <name type="ordered locus">CPn_0735</name>
    <name type="ordered locus">CP_0011</name>
    <name type="ordered locus">CPj0735</name>
    <name type="ordered locus">CpB0763</name>
</gene>
<accession>Q9Z7H0</accession>
<comment type="catalytic activity">
    <reaction evidence="1">
        <text>uridine + ATP = UMP + ADP + H(+)</text>
        <dbReference type="Rhea" id="RHEA:16825"/>
        <dbReference type="ChEBI" id="CHEBI:15378"/>
        <dbReference type="ChEBI" id="CHEBI:16704"/>
        <dbReference type="ChEBI" id="CHEBI:30616"/>
        <dbReference type="ChEBI" id="CHEBI:57865"/>
        <dbReference type="ChEBI" id="CHEBI:456216"/>
        <dbReference type="EC" id="2.7.1.48"/>
    </reaction>
</comment>
<comment type="catalytic activity">
    <reaction evidence="1">
        <text>cytidine + ATP = CMP + ADP + H(+)</text>
        <dbReference type="Rhea" id="RHEA:24674"/>
        <dbReference type="ChEBI" id="CHEBI:15378"/>
        <dbReference type="ChEBI" id="CHEBI:17562"/>
        <dbReference type="ChEBI" id="CHEBI:30616"/>
        <dbReference type="ChEBI" id="CHEBI:60377"/>
        <dbReference type="ChEBI" id="CHEBI:456216"/>
        <dbReference type="EC" id="2.7.1.48"/>
    </reaction>
</comment>
<comment type="pathway">
    <text evidence="1">Pyrimidine metabolism; CTP biosynthesis via salvage pathway; CTP from cytidine: step 1/3.</text>
</comment>
<comment type="pathway">
    <text evidence="1">Pyrimidine metabolism; UMP biosynthesis via salvage pathway; UMP from uridine: step 1/1.</text>
</comment>
<comment type="subcellular location">
    <subcellularLocation>
        <location evidence="1">Cytoplasm</location>
    </subcellularLocation>
</comment>
<comment type="similarity">
    <text evidence="1">Belongs to the uridine kinase family.</text>
</comment>
<reference key="1">
    <citation type="journal article" date="1999" name="Nat. Genet.">
        <title>Comparative genomes of Chlamydia pneumoniae and C. trachomatis.</title>
        <authorList>
            <person name="Kalman S."/>
            <person name="Mitchell W.P."/>
            <person name="Marathe R."/>
            <person name="Lammel C.J."/>
            <person name="Fan J."/>
            <person name="Hyman R.W."/>
            <person name="Olinger L."/>
            <person name="Grimwood J."/>
            <person name="Davis R.W."/>
            <person name="Stephens R.S."/>
        </authorList>
    </citation>
    <scope>NUCLEOTIDE SEQUENCE [LARGE SCALE GENOMIC DNA]</scope>
    <source>
        <strain>CWL029</strain>
    </source>
</reference>
<reference key="2">
    <citation type="journal article" date="2000" name="Nucleic Acids Res.">
        <title>Genome sequences of Chlamydia trachomatis MoPn and Chlamydia pneumoniae AR39.</title>
        <authorList>
            <person name="Read T.D."/>
            <person name="Brunham R.C."/>
            <person name="Shen C."/>
            <person name="Gill S.R."/>
            <person name="Heidelberg J.F."/>
            <person name="White O."/>
            <person name="Hickey E.K."/>
            <person name="Peterson J.D."/>
            <person name="Utterback T.R."/>
            <person name="Berry K.J."/>
            <person name="Bass S."/>
            <person name="Linher K.D."/>
            <person name="Weidman J.F."/>
            <person name="Khouri H.M."/>
            <person name="Craven B."/>
            <person name="Bowman C."/>
            <person name="Dodson R.J."/>
            <person name="Gwinn M.L."/>
            <person name="Nelson W.C."/>
            <person name="DeBoy R.T."/>
            <person name="Kolonay J.F."/>
            <person name="McClarty G."/>
            <person name="Salzberg S.L."/>
            <person name="Eisen J.A."/>
            <person name="Fraser C.M."/>
        </authorList>
    </citation>
    <scope>NUCLEOTIDE SEQUENCE [LARGE SCALE GENOMIC DNA]</scope>
    <source>
        <strain>AR39</strain>
    </source>
</reference>
<reference key="3">
    <citation type="journal article" date="2000" name="Nucleic Acids Res.">
        <title>Comparison of whole genome sequences of Chlamydia pneumoniae J138 from Japan and CWL029 from USA.</title>
        <authorList>
            <person name="Shirai M."/>
            <person name="Hirakawa H."/>
            <person name="Kimoto M."/>
            <person name="Tabuchi M."/>
            <person name="Kishi F."/>
            <person name="Ouchi K."/>
            <person name="Shiba T."/>
            <person name="Ishii K."/>
            <person name="Hattori M."/>
            <person name="Kuhara S."/>
            <person name="Nakazawa T."/>
        </authorList>
    </citation>
    <scope>NUCLEOTIDE SEQUENCE [LARGE SCALE GENOMIC DNA]</scope>
    <source>
        <strain>J138</strain>
    </source>
</reference>
<reference key="4">
    <citation type="submission" date="2002-05" db="EMBL/GenBank/DDBJ databases">
        <title>The genome sequence of Chlamydia pneumoniae TW183 and comparison with other Chlamydia strains based on whole genome sequence analysis.</title>
        <authorList>
            <person name="Geng M.M."/>
            <person name="Schuhmacher A."/>
            <person name="Muehldorfer I."/>
            <person name="Bensch K.W."/>
            <person name="Schaefer K.P."/>
            <person name="Schneider S."/>
            <person name="Pohl T."/>
            <person name="Essig A."/>
            <person name="Marre R."/>
            <person name="Melchers K."/>
        </authorList>
    </citation>
    <scope>NUCLEOTIDE SEQUENCE [LARGE SCALE GENOMIC DNA]</scope>
    <source>
        <strain>TW-183</strain>
    </source>
</reference>
<name>URK_CHLPN</name>